<keyword id="KW-1185">Reference proteome</keyword>
<keyword id="KW-0687">Ribonucleoprotein</keyword>
<keyword id="KW-0689">Ribosomal protein</keyword>
<protein>
    <recommendedName>
        <fullName evidence="1">Large ribosomal subunit protein bL36</fullName>
    </recommendedName>
    <alternativeName>
        <fullName evidence="2">50S ribosomal protein L36</fullName>
    </alternativeName>
</protein>
<dbReference type="EMBL" id="CP000249">
    <property type="protein sequence ID" value="ABD09990.1"/>
    <property type="molecule type" value="Genomic_DNA"/>
</dbReference>
<dbReference type="RefSeq" id="WP_003956441.1">
    <property type="nucleotide sequence ID" value="NZ_MSEA01000046.1"/>
</dbReference>
<dbReference type="SMR" id="Q2JFF2"/>
<dbReference type="STRING" id="106370.Francci3_0606"/>
<dbReference type="GeneID" id="97760394"/>
<dbReference type="KEGG" id="fra:Francci3_0606"/>
<dbReference type="eggNOG" id="COG0257">
    <property type="taxonomic scope" value="Bacteria"/>
</dbReference>
<dbReference type="HOGENOM" id="CLU_135723_6_2_11"/>
<dbReference type="OrthoDB" id="9802520at2"/>
<dbReference type="PhylomeDB" id="Q2JFF2"/>
<dbReference type="Proteomes" id="UP000001937">
    <property type="component" value="Chromosome"/>
</dbReference>
<dbReference type="GO" id="GO:0005737">
    <property type="term" value="C:cytoplasm"/>
    <property type="evidence" value="ECO:0007669"/>
    <property type="project" value="UniProtKB-ARBA"/>
</dbReference>
<dbReference type="GO" id="GO:1990904">
    <property type="term" value="C:ribonucleoprotein complex"/>
    <property type="evidence" value="ECO:0007669"/>
    <property type="project" value="UniProtKB-KW"/>
</dbReference>
<dbReference type="GO" id="GO:0005840">
    <property type="term" value="C:ribosome"/>
    <property type="evidence" value="ECO:0007669"/>
    <property type="project" value="UniProtKB-KW"/>
</dbReference>
<dbReference type="GO" id="GO:0003735">
    <property type="term" value="F:structural constituent of ribosome"/>
    <property type="evidence" value="ECO:0007669"/>
    <property type="project" value="InterPro"/>
</dbReference>
<dbReference type="GO" id="GO:0006412">
    <property type="term" value="P:translation"/>
    <property type="evidence" value="ECO:0007669"/>
    <property type="project" value="UniProtKB-UniRule"/>
</dbReference>
<dbReference type="HAMAP" id="MF_00251">
    <property type="entry name" value="Ribosomal_bL36"/>
    <property type="match status" value="1"/>
</dbReference>
<dbReference type="InterPro" id="IPR000473">
    <property type="entry name" value="Ribosomal_bL36"/>
</dbReference>
<dbReference type="InterPro" id="IPR035977">
    <property type="entry name" value="Ribosomal_bL36_sp"/>
</dbReference>
<dbReference type="NCBIfam" id="TIGR01022">
    <property type="entry name" value="rpmJ_bact"/>
    <property type="match status" value="1"/>
</dbReference>
<dbReference type="PANTHER" id="PTHR42888">
    <property type="entry name" value="50S RIBOSOMAL PROTEIN L36, CHLOROPLASTIC"/>
    <property type="match status" value="1"/>
</dbReference>
<dbReference type="PANTHER" id="PTHR42888:SF1">
    <property type="entry name" value="LARGE RIBOSOMAL SUBUNIT PROTEIN BL36C"/>
    <property type="match status" value="1"/>
</dbReference>
<dbReference type="Pfam" id="PF00444">
    <property type="entry name" value="Ribosomal_L36"/>
    <property type="match status" value="1"/>
</dbReference>
<dbReference type="SUPFAM" id="SSF57840">
    <property type="entry name" value="Ribosomal protein L36"/>
    <property type="match status" value="1"/>
</dbReference>
<dbReference type="PROSITE" id="PS00828">
    <property type="entry name" value="RIBOSOMAL_L36"/>
    <property type="match status" value="1"/>
</dbReference>
<gene>
    <name evidence="1" type="primary">rpmJ</name>
    <name type="ordered locus">Francci3_0606</name>
</gene>
<evidence type="ECO:0000255" key="1">
    <source>
        <dbReference type="HAMAP-Rule" id="MF_00251"/>
    </source>
</evidence>
<evidence type="ECO:0000305" key="2"/>
<sequence>MKVKPSVKKICDKCKVIRRHGRVMVICDNLRHKQRQG</sequence>
<feature type="chain" id="PRO_0000302209" description="Large ribosomal subunit protein bL36">
    <location>
        <begin position="1"/>
        <end position="37"/>
    </location>
</feature>
<accession>Q2JFF2</accession>
<reference key="1">
    <citation type="journal article" date="2007" name="Genome Res.">
        <title>Genome characteristics of facultatively symbiotic Frankia sp. strains reflect host range and host plant biogeography.</title>
        <authorList>
            <person name="Normand P."/>
            <person name="Lapierre P."/>
            <person name="Tisa L.S."/>
            <person name="Gogarten J.P."/>
            <person name="Alloisio N."/>
            <person name="Bagnarol E."/>
            <person name="Bassi C.A."/>
            <person name="Berry A.M."/>
            <person name="Bickhart D.M."/>
            <person name="Choisne N."/>
            <person name="Couloux A."/>
            <person name="Cournoyer B."/>
            <person name="Cruveiller S."/>
            <person name="Daubin V."/>
            <person name="Demange N."/>
            <person name="Francino M.P."/>
            <person name="Goltsman E."/>
            <person name="Huang Y."/>
            <person name="Kopp O.R."/>
            <person name="Labarre L."/>
            <person name="Lapidus A."/>
            <person name="Lavire C."/>
            <person name="Marechal J."/>
            <person name="Martinez M."/>
            <person name="Mastronunzio J.E."/>
            <person name="Mullin B.C."/>
            <person name="Niemann J."/>
            <person name="Pujic P."/>
            <person name="Rawnsley T."/>
            <person name="Rouy Z."/>
            <person name="Schenowitz C."/>
            <person name="Sellstedt A."/>
            <person name="Tavares F."/>
            <person name="Tomkins J.P."/>
            <person name="Vallenet D."/>
            <person name="Valverde C."/>
            <person name="Wall L.G."/>
            <person name="Wang Y."/>
            <person name="Medigue C."/>
            <person name="Benson D.R."/>
        </authorList>
    </citation>
    <scope>NUCLEOTIDE SEQUENCE [LARGE SCALE GENOMIC DNA]</scope>
    <source>
        <strain>DSM 45818 / CECT 9043 / HFP020203 / CcI3</strain>
    </source>
</reference>
<organism>
    <name type="scientific">Frankia casuarinae (strain DSM 45818 / CECT 9043 / HFP020203 / CcI3)</name>
    <dbReference type="NCBI Taxonomy" id="106370"/>
    <lineage>
        <taxon>Bacteria</taxon>
        <taxon>Bacillati</taxon>
        <taxon>Actinomycetota</taxon>
        <taxon>Actinomycetes</taxon>
        <taxon>Frankiales</taxon>
        <taxon>Frankiaceae</taxon>
        <taxon>Frankia</taxon>
    </lineage>
</organism>
<name>RL36_FRACC</name>
<proteinExistence type="inferred from homology"/>
<comment type="similarity">
    <text evidence="1">Belongs to the bacterial ribosomal protein bL36 family.</text>
</comment>